<name>BH081_ARATH</name>
<gene>
    <name type="primary">BHLH81</name>
    <name type="synonym">EN72</name>
    <name type="ordered locus">At4g09180</name>
    <name type="ORF">T8A17.70</name>
</gene>
<sequence length="262" mass="28691">MQPTSVGSSGGGDDGGGRGGGGGLSRSGLSRIRSAPATWLEALLEEDEEESLKPNLGLTDLLTGNSNDLPTSRGSFEFPIPVEQGLYQQGGFHRQNSTPADFLSGSDGFIQSFGIQANYDYLSGNIDVSPGSKRSREMEALFSSPEFTSQMKGEQSSGQVPTGVSSMSDMNMENLMEDSVAFRVRAKRGCATHPRSIAERVRRTRISDRIRKLQELVPNMDKQTNTADMLEEAVEYVKVLQRQIQELTEEQKRCTCIPKEEQ</sequence>
<accession>Q9M0R0</accession>
<keyword id="KW-0238">DNA-binding</keyword>
<keyword id="KW-0539">Nucleus</keyword>
<keyword id="KW-1185">Reference proteome</keyword>
<keyword id="KW-0804">Transcription</keyword>
<keyword id="KW-0805">Transcription regulation</keyword>
<reference key="1">
    <citation type="journal article" date="2003" name="Mol. Biol. Evol.">
        <title>The basic helix-loop-helix transcription factor family in plants: a genome-wide study of protein structure and functional diversity.</title>
        <authorList>
            <person name="Heim M.A."/>
            <person name="Jakoby M."/>
            <person name="Werber M."/>
            <person name="Martin C."/>
            <person name="Weisshaar B."/>
            <person name="Bailey P.C."/>
        </authorList>
    </citation>
    <scope>NUCLEOTIDE SEQUENCE [MRNA]</scope>
    <scope>TISSUE SPECIFICITY</scope>
    <scope>GENE FAMILY</scope>
    <scope>NOMENCLATURE</scope>
    <source>
        <strain>cv. Columbia</strain>
    </source>
</reference>
<reference key="2">
    <citation type="journal article" date="1999" name="Nature">
        <title>Sequence and analysis of chromosome 4 of the plant Arabidopsis thaliana.</title>
        <authorList>
            <person name="Mayer K.F.X."/>
            <person name="Schueller C."/>
            <person name="Wambutt R."/>
            <person name="Murphy G."/>
            <person name="Volckaert G."/>
            <person name="Pohl T."/>
            <person name="Duesterhoeft A."/>
            <person name="Stiekema W."/>
            <person name="Entian K.-D."/>
            <person name="Terryn N."/>
            <person name="Harris B."/>
            <person name="Ansorge W."/>
            <person name="Brandt P."/>
            <person name="Grivell L.A."/>
            <person name="Rieger M."/>
            <person name="Weichselgartner M."/>
            <person name="de Simone V."/>
            <person name="Obermaier B."/>
            <person name="Mache R."/>
            <person name="Mueller M."/>
            <person name="Kreis M."/>
            <person name="Delseny M."/>
            <person name="Puigdomenech P."/>
            <person name="Watson M."/>
            <person name="Schmidtheini T."/>
            <person name="Reichert B."/>
            <person name="Portetelle D."/>
            <person name="Perez-Alonso M."/>
            <person name="Boutry M."/>
            <person name="Bancroft I."/>
            <person name="Vos P."/>
            <person name="Hoheisel J."/>
            <person name="Zimmermann W."/>
            <person name="Wedler H."/>
            <person name="Ridley P."/>
            <person name="Langham S.-A."/>
            <person name="McCullagh B."/>
            <person name="Bilham L."/>
            <person name="Robben J."/>
            <person name="van der Schueren J."/>
            <person name="Grymonprez B."/>
            <person name="Chuang Y.-J."/>
            <person name="Vandenbussche F."/>
            <person name="Braeken M."/>
            <person name="Weltjens I."/>
            <person name="Voet M."/>
            <person name="Bastiaens I."/>
            <person name="Aert R."/>
            <person name="Defoor E."/>
            <person name="Weitzenegger T."/>
            <person name="Bothe G."/>
            <person name="Ramsperger U."/>
            <person name="Hilbert H."/>
            <person name="Braun M."/>
            <person name="Holzer E."/>
            <person name="Brandt A."/>
            <person name="Peters S."/>
            <person name="van Staveren M."/>
            <person name="Dirkse W."/>
            <person name="Mooijman P."/>
            <person name="Klein Lankhorst R."/>
            <person name="Rose M."/>
            <person name="Hauf J."/>
            <person name="Koetter P."/>
            <person name="Berneiser S."/>
            <person name="Hempel S."/>
            <person name="Feldpausch M."/>
            <person name="Lamberth S."/>
            <person name="Van den Daele H."/>
            <person name="De Keyser A."/>
            <person name="Buysshaert C."/>
            <person name="Gielen J."/>
            <person name="Villarroel R."/>
            <person name="De Clercq R."/>
            <person name="van Montagu M."/>
            <person name="Rogers J."/>
            <person name="Cronin A."/>
            <person name="Quail M.A."/>
            <person name="Bray-Allen S."/>
            <person name="Clark L."/>
            <person name="Doggett J."/>
            <person name="Hall S."/>
            <person name="Kay M."/>
            <person name="Lennard N."/>
            <person name="McLay K."/>
            <person name="Mayes R."/>
            <person name="Pettett A."/>
            <person name="Rajandream M.A."/>
            <person name="Lyne M."/>
            <person name="Benes V."/>
            <person name="Rechmann S."/>
            <person name="Borkova D."/>
            <person name="Bloecker H."/>
            <person name="Scharfe M."/>
            <person name="Grimm M."/>
            <person name="Loehnert T.-H."/>
            <person name="Dose S."/>
            <person name="de Haan M."/>
            <person name="Maarse A.C."/>
            <person name="Schaefer M."/>
            <person name="Mueller-Auer S."/>
            <person name="Gabel C."/>
            <person name="Fuchs M."/>
            <person name="Fartmann B."/>
            <person name="Granderath K."/>
            <person name="Dauner D."/>
            <person name="Herzl A."/>
            <person name="Neumann S."/>
            <person name="Argiriou A."/>
            <person name="Vitale D."/>
            <person name="Liguori R."/>
            <person name="Piravandi E."/>
            <person name="Massenet O."/>
            <person name="Quigley F."/>
            <person name="Clabauld G."/>
            <person name="Muendlein A."/>
            <person name="Felber R."/>
            <person name="Schnabl S."/>
            <person name="Hiller R."/>
            <person name="Schmidt W."/>
            <person name="Lecharny A."/>
            <person name="Aubourg S."/>
            <person name="Chefdor F."/>
            <person name="Cooke R."/>
            <person name="Berger C."/>
            <person name="Monfort A."/>
            <person name="Casacuberta E."/>
            <person name="Gibbons T."/>
            <person name="Weber N."/>
            <person name="Vandenbol M."/>
            <person name="Bargues M."/>
            <person name="Terol J."/>
            <person name="Torres A."/>
            <person name="Perez-Perez A."/>
            <person name="Purnelle B."/>
            <person name="Bent E."/>
            <person name="Johnson S."/>
            <person name="Tacon D."/>
            <person name="Jesse T."/>
            <person name="Heijnen L."/>
            <person name="Schwarz S."/>
            <person name="Scholler P."/>
            <person name="Heber S."/>
            <person name="Francs P."/>
            <person name="Bielke C."/>
            <person name="Frishman D."/>
            <person name="Haase D."/>
            <person name="Lemcke K."/>
            <person name="Mewes H.-W."/>
            <person name="Stocker S."/>
            <person name="Zaccaria P."/>
            <person name="Bevan M."/>
            <person name="Wilson R.K."/>
            <person name="de la Bastide M."/>
            <person name="Habermann K."/>
            <person name="Parnell L."/>
            <person name="Dedhia N."/>
            <person name="Gnoj L."/>
            <person name="Schutz K."/>
            <person name="Huang E."/>
            <person name="Spiegel L."/>
            <person name="Sekhon M."/>
            <person name="Murray J."/>
            <person name="Sheet P."/>
            <person name="Cordes M."/>
            <person name="Abu-Threideh J."/>
            <person name="Stoneking T."/>
            <person name="Kalicki J."/>
            <person name="Graves T."/>
            <person name="Harmon G."/>
            <person name="Edwards J."/>
            <person name="Latreille P."/>
            <person name="Courtney L."/>
            <person name="Cloud J."/>
            <person name="Abbott A."/>
            <person name="Scott K."/>
            <person name="Johnson D."/>
            <person name="Minx P."/>
            <person name="Bentley D."/>
            <person name="Fulton B."/>
            <person name="Miller N."/>
            <person name="Greco T."/>
            <person name="Kemp K."/>
            <person name="Kramer J."/>
            <person name="Fulton L."/>
            <person name="Mardis E."/>
            <person name="Dante M."/>
            <person name="Pepin K."/>
            <person name="Hillier L.W."/>
            <person name="Nelson J."/>
            <person name="Spieth J."/>
            <person name="Ryan E."/>
            <person name="Andrews S."/>
            <person name="Geisel C."/>
            <person name="Layman D."/>
            <person name="Du H."/>
            <person name="Ali J."/>
            <person name="Berghoff A."/>
            <person name="Jones K."/>
            <person name="Drone K."/>
            <person name="Cotton M."/>
            <person name="Joshu C."/>
            <person name="Antonoiu B."/>
            <person name="Zidanic M."/>
            <person name="Strong C."/>
            <person name="Sun H."/>
            <person name="Lamar B."/>
            <person name="Yordan C."/>
            <person name="Ma P."/>
            <person name="Zhong J."/>
            <person name="Preston R."/>
            <person name="Vil D."/>
            <person name="Shekher M."/>
            <person name="Matero A."/>
            <person name="Shah R."/>
            <person name="Swaby I.K."/>
            <person name="O'Shaughnessy A."/>
            <person name="Rodriguez M."/>
            <person name="Hoffman J."/>
            <person name="Till S."/>
            <person name="Granat S."/>
            <person name="Shohdy N."/>
            <person name="Hasegawa A."/>
            <person name="Hameed A."/>
            <person name="Lodhi M."/>
            <person name="Johnson A."/>
            <person name="Chen E."/>
            <person name="Marra M.A."/>
            <person name="Martienssen R."/>
            <person name="McCombie W.R."/>
        </authorList>
    </citation>
    <scope>NUCLEOTIDE SEQUENCE [LARGE SCALE GENOMIC DNA]</scope>
    <source>
        <strain>cv. Columbia</strain>
    </source>
</reference>
<reference key="3">
    <citation type="journal article" date="2017" name="Plant J.">
        <title>Araport11: a complete reannotation of the Arabidopsis thaliana reference genome.</title>
        <authorList>
            <person name="Cheng C.Y."/>
            <person name="Krishnakumar V."/>
            <person name="Chan A.P."/>
            <person name="Thibaud-Nissen F."/>
            <person name="Schobel S."/>
            <person name="Town C.D."/>
        </authorList>
    </citation>
    <scope>GENOME REANNOTATION</scope>
    <source>
        <strain>cv. Columbia</strain>
    </source>
</reference>
<reference key="4">
    <citation type="journal article" date="2003" name="Science">
        <title>Empirical analysis of transcriptional activity in the Arabidopsis genome.</title>
        <authorList>
            <person name="Yamada K."/>
            <person name="Lim J."/>
            <person name="Dale J.M."/>
            <person name="Chen H."/>
            <person name="Shinn P."/>
            <person name="Palm C.J."/>
            <person name="Southwick A.M."/>
            <person name="Wu H.C."/>
            <person name="Kim C.J."/>
            <person name="Nguyen M."/>
            <person name="Pham P.K."/>
            <person name="Cheuk R.F."/>
            <person name="Karlin-Newmann G."/>
            <person name="Liu S.X."/>
            <person name="Lam B."/>
            <person name="Sakano H."/>
            <person name="Wu T."/>
            <person name="Yu G."/>
            <person name="Miranda M."/>
            <person name="Quach H.L."/>
            <person name="Tripp M."/>
            <person name="Chang C.H."/>
            <person name="Lee J.M."/>
            <person name="Toriumi M.J."/>
            <person name="Chan M.M."/>
            <person name="Tang C.C."/>
            <person name="Onodera C.S."/>
            <person name="Deng J.M."/>
            <person name="Akiyama K."/>
            <person name="Ansari Y."/>
            <person name="Arakawa T."/>
            <person name="Banh J."/>
            <person name="Banno F."/>
            <person name="Bowser L."/>
            <person name="Brooks S.Y."/>
            <person name="Carninci P."/>
            <person name="Chao Q."/>
            <person name="Choy N."/>
            <person name="Enju A."/>
            <person name="Goldsmith A.D."/>
            <person name="Gurjal M."/>
            <person name="Hansen N.F."/>
            <person name="Hayashizaki Y."/>
            <person name="Johnson-Hopson C."/>
            <person name="Hsuan V.W."/>
            <person name="Iida K."/>
            <person name="Karnes M."/>
            <person name="Khan S."/>
            <person name="Koesema E."/>
            <person name="Ishida J."/>
            <person name="Jiang P.X."/>
            <person name="Jones T."/>
            <person name="Kawai J."/>
            <person name="Kamiya A."/>
            <person name="Meyers C."/>
            <person name="Nakajima M."/>
            <person name="Narusaka M."/>
            <person name="Seki M."/>
            <person name="Sakurai T."/>
            <person name="Satou M."/>
            <person name="Tamse R."/>
            <person name="Vaysberg M."/>
            <person name="Wallender E.K."/>
            <person name="Wong C."/>
            <person name="Yamamura Y."/>
            <person name="Yuan S."/>
            <person name="Shinozaki K."/>
            <person name="Davis R.W."/>
            <person name="Theologis A."/>
            <person name="Ecker J.R."/>
        </authorList>
    </citation>
    <scope>NUCLEOTIDE SEQUENCE [LARGE SCALE MRNA]</scope>
    <source>
        <strain>cv. Columbia</strain>
    </source>
</reference>
<reference key="5">
    <citation type="submission" date="2006-07" db="EMBL/GenBank/DDBJ databases">
        <title>Large-scale analysis of RIKEN Arabidopsis full-length (RAFL) cDNAs.</title>
        <authorList>
            <person name="Totoki Y."/>
            <person name="Seki M."/>
            <person name="Ishida J."/>
            <person name="Nakajima M."/>
            <person name="Enju A."/>
            <person name="Kamiya A."/>
            <person name="Narusaka M."/>
            <person name="Shin-i T."/>
            <person name="Nakagawa M."/>
            <person name="Sakamoto N."/>
            <person name="Oishi K."/>
            <person name="Kohara Y."/>
            <person name="Kobayashi M."/>
            <person name="Toyoda A."/>
            <person name="Sakaki Y."/>
            <person name="Sakurai T."/>
            <person name="Iida K."/>
            <person name="Akiyama K."/>
            <person name="Satou M."/>
            <person name="Toyoda T."/>
            <person name="Konagaya A."/>
            <person name="Carninci P."/>
            <person name="Kawai J."/>
            <person name="Hayashizaki Y."/>
            <person name="Shinozaki K."/>
        </authorList>
    </citation>
    <scope>NUCLEOTIDE SEQUENCE [LARGE SCALE MRNA]</scope>
    <source>
        <strain>cv. Columbia</strain>
    </source>
</reference>
<reference key="6">
    <citation type="journal article" date="2003" name="Plant Cell">
        <title>The Arabidopsis basic/helix-loop-helix transcription factor family.</title>
        <authorList>
            <person name="Toledo-Ortiz G."/>
            <person name="Huq E."/>
            <person name="Quail P.H."/>
        </authorList>
    </citation>
    <scope>GENE FAMILY</scope>
</reference>
<reference key="7">
    <citation type="journal article" date="2003" name="Plant Cell">
        <title>Update on the basic helix-loop-helix transcription factor gene family in Arabidopsis thaliana.</title>
        <authorList>
            <person name="Bailey P.C."/>
            <person name="Martin C."/>
            <person name="Toledo-Ortiz G."/>
            <person name="Quail P.H."/>
            <person name="Huq E."/>
            <person name="Heim M.A."/>
            <person name="Jakoby M."/>
            <person name="Werber M."/>
            <person name="Weisshaar B."/>
        </authorList>
    </citation>
    <scope>GENE FAMILY</scope>
    <scope>NOMENCLATURE</scope>
</reference>
<feature type="chain" id="PRO_0000358773" description="Transcription factor bHLH81">
    <location>
        <begin position="1"/>
        <end position="262"/>
    </location>
</feature>
<feature type="domain" description="bHLH" evidence="1">
    <location>
        <begin position="190"/>
        <end position="240"/>
    </location>
</feature>
<feature type="region of interest" description="Disordered" evidence="2">
    <location>
        <begin position="1"/>
        <end position="29"/>
    </location>
</feature>
<feature type="compositionally biased region" description="Gly residues" evidence="2">
    <location>
        <begin position="8"/>
        <end position="25"/>
    </location>
</feature>
<proteinExistence type="evidence at transcript level"/>
<organism>
    <name type="scientific">Arabidopsis thaliana</name>
    <name type="common">Mouse-ear cress</name>
    <dbReference type="NCBI Taxonomy" id="3702"/>
    <lineage>
        <taxon>Eukaryota</taxon>
        <taxon>Viridiplantae</taxon>
        <taxon>Streptophyta</taxon>
        <taxon>Embryophyta</taxon>
        <taxon>Tracheophyta</taxon>
        <taxon>Spermatophyta</taxon>
        <taxon>Magnoliopsida</taxon>
        <taxon>eudicotyledons</taxon>
        <taxon>Gunneridae</taxon>
        <taxon>Pentapetalae</taxon>
        <taxon>rosids</taxon>
        <taxon>malvids</taxon>
        <taxon>Brassicales</taxon>
        <taxon>Brassicaceae</taxon>
        <taxon>Camelineae</taxon>
        <taxon>Arabidopsis</taxon>
    </lineage>
</organism>
<comment type="subunit">
    <text evidence="4">Homodimer.</text>
</comment>
<comment type="subcellular location">
    <subcellularLocation>
        <location evidence="1">Nucleus</location>
    </subcellularLocation>
</comment>
<comment type="tissue specificity">
    <text evidence="3">Expressed in flowers.</text>
</comment>
<comment type="sequence caution" evidence="4">
    <conflict type="miscellaneous discrepancy">
        <sequence resource="EMBL" id="AF488613"/>
    </conflict>
    <text>Sequencing errors.</text>
</comment>
<dbReference type="EMBL" id="AF488613">
    <property type="status" value="NOT_ANNOTATED_CDS"/>
    <property type="molecule type" value="mRNA"/>
</dbReference>
<dbReference type="EMBL" id="AL161514">
    <property type="protein sequence ID" value="CAB78042.1"/>
    <property type="molecule type" value="Genomic_DNA"/>
</dbReference>
<dbReference type="EMBL" id="CP002687">
    <property type="protein sequence ID" value="AEE82732.1"/>
    <property type="molecule type" value="Genomic_DNA"/>
</dbReference>
<dbReference type="EMBL" id="BT010423">
    <property type="protein sequence ID" value="AAQ62424.1"/>
    <property type="molecule type" value="mRNA"/>
</dbReference>
<dbReference type="EMBL" id="AK230384">
    <property type="protein sequence ID" value="BAF02182.1"/>
    <property type="molecule type" value="mRNA"/>
</dbReference>
<dbReference type="PIR" id="B85093">
    <property type="entry name" value="B85093"/>
</dbReference>
<dbReference type="RefSeq" id="NP_192657.1">
    <property type="nucleotide sequence ID" value="NM_116987.5"/>
</dbReference>
<dbReference type="SMR" id="Q9M0R0"/>
<dbReference type="BioGRID" id="11798">
    <property type="interactions" value="9"/>
</dbReference>
<dbReference type="FunCoup" id="Q9M0R0">
    <property type="interactions" value="150"/>
</dbReference>
<dbReference type="IntAct" id="Q9M0R0">
    <property type="interactions" value="8"/>
</dbReference>
<dbReference type="STRING" id="3702.Q9M0R0"/>
<dbReference type="PaxDb" id="3702-AT4G09180.1"/>
<dbReference type="ProteomicsDB" id="240765"/>
<dbReference type="EnsemblPlants" id="AT4G09180.1">
    <property type="protein sequence ID" value="AT4G09180.1"/>
    <property type="gene ID" value="AT4G09180"/>
</dbReference>
<dbReference type="GeneID" id="826499"/>
<dbReference type="Gramene" id="AT4G09180.1">
    <property type="protein sequence ID" value="AT4G09180.1"/>
    <property type="gene ID" value="AT4G09180"/>
</dbReference>
<dbReference type="KEGG" id="ath:AT4G09180"/>
<dbReference type="Araport" id="AT4G09180"/>
<dbReference type="TAIR" id="AT4G09180">
    <property type="gene designation" value="FBH2"/>
</dbReference>
<dbReference type="eggNOG" id="ENOG502RY1W">
    <property type="taxonomic scope" value="Eukaryota"/>
</dbReference>
<dbReference type="HOGENOM" id="CLU_063812_0_0_1"/>
<dbReference type="InParanoid" id="Q9M0R0"/>
<dbReference type="OMA" id="EQKRCTC"/>
<dbReference type="OrthoDB" id="2019494at2759"/>
<dbReference type="PhylomeDB" id="Q9M0R0"/>
<dbReference type="PRO" id="PR:Q9M0R0"/>
<dbReference type="Proteomes" id="UP000006548">
    <property type="component" value="Chromosome 4"/>
</dbReference>
<dbReference type="ExpressionAtlas" id="Q9M0R0">
    <property type="expression patterns" value="baseline and differential"/>
</dbReference>
<dbReference type="GO" id="GO:0005634">
    <property type="term" value="C:nucleus"/>
    <property type="evidence" value="ECO:0007669"/>
    <property type="project" value="UniProtKB-SubCell"/>
</dbReference>
<dbReference type="GO" id="GO:0000987">
    <property type="term" value="F:cis-regulatory region sequence-specific DNA binding"/>
    <property type="evidence" value="ECO:0000314"/>
    <property type="project" value="UniProtKB"/>
</dbReference>
<dbReference type="GO" id="GO:0003700">
    <property type="term" value="F:DNA-binding transcription factor activity"/>
    <property type="evidence" value="ECO:0000250"/>
    <property type="project" value="TAIR"/>
</dbReference>
<dbReference type="GO" id="GO:0046983">
    <property type="term" value="F:protein dimerization activity"/>
    <property type="evidence" value="ECO:0007669"/>
    <property type="project" value="InterPro"/>
</dbReference>
<dbReference type="GO" id="GO:0006355">
    <property type="term" value="P:regulation of DNA-templated transcription"/>
    <property type="evidence" value="ECO:0000304"/>
    <property type="project" value="TAIR"/>
</dbReference>
<dbReference type="GO" id="GO:0010468">
    <property type="term" value="P:regulation of gene expression"/>
    <property type="evidence" value="ECO:0000315"/>
    <property type="project" value="UniProtKB"/>
</dbReference>
<dbReference type="GO" id="GO:2000028">
    <property type="term" value="P:regulation of photoperiodism, flowering"/>
    <property type="evidence" value="ECO:0000315"/>
    <property type="project" value="UniProtKB"/>
</dbReference>
<dbReference type="CDD" id="cd11393">
    <property type="entry name" value="bHLH_AtbHLH_like"/>
    <property type="match status" value="1"/>
</dbReference>
<dbReference type="FunFam" id="4.10.280.10:FF:000021">
    <property type="entry name" value="Transcription factor bHLH130 family"/>
    <property type="match status" value="1"/>
</dbReference>
<dbReference type="Gene3D" id="4.10.280.10">
    <property type="entry name" value="Helix-loop-helix DNA-binding domain"/>
    <property type="match status" value="1"/>
</dbReference>
<dbReference type="InterPro" id="IPR045239">
    <property type="entry name" value="bHLH95_bHLH"/>
</dbReference>
<dbReference type="InterPro" id="IPR011598">
    <property type="entry name" value="bHLH_dom"/>
</dbReference>
<dbReference type="InterPro" id="IPR036638">
    <property type="entry name" value="HLH_DNA-bd_sf"/>
</dbReference>
<dbReference type="InterPro" id="IPR045843">
    <property type="entry name" value="IND-like"/>
</dbReference>
<dbReference type="PANTHER" id="PTHR16223:SF51">
    <property type="entry name" value="TRANSCRIPTION FACTOR BHLH117-RELATED"/>
    <property type="match status" value="1"/>
</dbReference>
<dbReference type="PANTHER" id="PTHR16223">
    <property type="entry name" value="TRANSCRIPTION FACTOR BHLH83-RELATED"/>
    <property type="match status" value="1"/>
</dbReference>
<dbReference type="Pfam" id="PF00010">
    <property type="entry name" value="HLH"/>
    <property type="match status" value="1"/>
</dbReference>
<dbReference type="SMART" id="SM00353">
    <property type="entry name" value="HLH"/>
    <property type="match status" value="1"/>
</dbReference>
<dbReference type="SUPFAM" id="SSF47459">
    <property type="entry name" value="HLH, helix-loop-helix DNA-binding domain"/>
    <property type="match status" value="1"/>
</dbReference>
<dbReference type="PROSITE" id="PS50888">
    <property type="entry name" value="BHLH"/>
    <property type="match status" value="1"/>
</dbReference>
<protein>
    <recommendedName>
        <fullName>Transcription factor bHLH81</fullName>
    </recommendedName>
    <alternativeName>
        <fullName>Basic helix-loop-helix protein 81</fullName>
        <shortName>AtbHLH81</shortName>
        <shortName>bHLH 81</shortName>
    </alternativeName>
    <alternativeName>
        <fullName>Transcription factor EN 72</fullName>
    </alternativeName>
    <alternativeName>
        <fullName>bHLH transcription factor bHLH081</fullName>
    </alternativeName>
</protein>
<evidence type="ECO:0000255" key="1">
    <source>
        <dbReference type="PROSITE-ProRule" id="PRU00981"/>
    </source>
</evidence>
<evidence type="ECO:0000256" key="2">
    <source>
        <dbReference type="SAM" id="MobiDB-lite"/>
    </source>
</evidence>
<evidence type="ECO:0000269" key="3">
    <source>
    </source>
</evidence>
<evidence type="ECO:0000305" key="4"/>